<keyword id="KW-0119">Carbohydrate metabolism</keyword>
<keyword id="KW-0456">Lyase</keyword>
<dbReference type="EC" id="4.2.1.126" evidence="1"/>
<dbReference type="EMBL" id="CP000886">
    <property type="protein sequence ID" value="ABX65791.1"/>
    <property type="molecule type" value="Genomic_DNA"/>
</dbReference>
<dbReference type="RefSeq" id="WP_001048528.1">
    <property type="nucleotide sequence ID" value="NC_010102.1"/>
</dbReference>
<dbReference type="SMR" id="A9N1U1"/>
<dbReference type="KEGG" id="spq:SPAB_00355"/>
<dbReference type="PATRIC" id="fig|1016998.12.peg.337"/>
<dbReference type="HOGENOM" id="CLU_049049_1_1_6"/>
<dbReference type="BioCyc" id="SENT1016998:SPAB_RS01460-MONOMER"/>
<dbReference type="UniPathway" id="UPA00342"/>
<dbReference type="UniPathway" id="UPA00343"/>
<dbReference type="UniPathway" id="UPA00544"/>
<dbReference type="Proteomes" id="UP000008556">
    <property type="component" value="Chromosome"/>
</dbReference>
<dbReference type="GO" id="GO:0097367">
    <property type="term" value="F:carbohydrate derivative binding"/>
    <property type="evidence" value="ECO:0007669"/>
    <property type="project" value="InterPro"/>
</dbReference>
<dbReference type="GO" id="GO:0016835">
    <property type="term" value="F:carbon-oxygen lyase activity"/>
    <property type="evidence" value="ECO:0007669"/>
    <property type="project" value="UniProtKB-UniRule"/>
</dbReference>
<dbReference type="GO" id="GO:0016803">
    <property type="term" value="F:ether hydrolase activity"/>
    <property type="evidence" value="ECO:0007669"/>
    <property type="project" value="TreeGrafter"/>
</dbReference>
<dbReference type="GO" id="GO:0097175">
    <property type="term" value="P:1,6-anhydro-N-acetyl-beta-muramic acid catabolic process"/>
    <property type="evidence" value="ECO:0007669"/>
    <property type="project" value="UniProtKB-UniRule"/>
</dbReference>
<dbReference type="GO" id="GO:0046348">
    <property type="term" value="P:amino sugar catabolic process"/>
    <property type="evidence" value="ECO:0007669"/>
    <property type="project" value="InterPro"/>
</dbReference>
<dbReference type="GO" id="GO:0097173">
    <property type="term" value="P:N-acetylmuramic acid catabolic process"/>
    <property type="evidence" value="ECO:0007669"/>
    <property type="project" value="UniProtKB-UniPathway"/>
</dbReference>
<dbReference type="GO" id="GO:0009254">
    <property type="term" value="P:peptidoglycan turnover"/>
    <property type="evidence" value="ECO:0007669"/>
    <property type="project" value="UniProtKB-UniRule"/>
</dbReference>
<dbReference type="CDD" id="cd05007">
    <property type="entry name" value="SIS_Etherase"/>
    <property type="match status" value="1"/>
</dbReference>
<dbReference type="FunFam" id="1.10.8.1080:FF:000001">
    <property type="entry name" value="N-acetylmuramic acid 6-phosphate etherase"/>
    <property type="match status" value="1"/>
</dbReference>
<dbReference type="FunFam" id="3.40.50.10490:FF:000014">
    <property type="entry name" value="N-acetylmuramic acid 6-phosphate etherase"/>
    <property type="match status" value="1"/>
</dbReference>
<dbReference type="Gene3D" id="1.10.8.1080">
    <property type="match status" value="1"/>
</dbReference>
<dbReference type="Gene3D" id="3.40.50.10490">
    <property type="entry name" value="Glucose-6-phosphate isomerase like protein, domain 1"/>
    <property type="match status" value="1"/>
</dbReference>
<dbReference type="HAMAP" id="MF_00068">
    <property type="entry name" value="MurQ"/>
    <property type="match status" value="1"/>
</dbReference>
<dbReference type="InterPro" id="IPR005488">
    <property type="entry name" value="Etherase_MurQ"/>
</dbReference>
<dbReference type="InterPro" id="IPR005486">
    <property type="entry name" value="Glucokinase_regulatory_CS"/>
</dbReference>
<dbReference type="InterPro" id="IPR040190">
    <property type="entry name" value="MURQ/GCKR"/>
</dbReference>
<dbReference type="InterPro" id="IPR001347">
    <property type="entry name" value="SIS_dom"/>
</dbReference>
<dbReference type="InterPro" id="IPR046348">
    <property type="entry name" value="SIS_dom_sf"/>
</dbReference>
<dbReference type="NCBIfam" id="TIGR00274">
    <property type="entry name" value="N-acetylmuramic acid 6-phosphate etherase"/>
    <property type="match status" value="1"/>
</dbReference>
<dbReference type="NCBIfam" id="NF003915">
    <property type="entry name" value="PRK05441.1"/>
    <property type="match status" value="1"/>
</dbReference>
<dbReference type="NCBIfam" id="NF009222">
    <property type="entry name" value="PRK12570.1"/>
    <property type="match status" value="1"/>
</dbReference>
<dbReference type="PANTHER" id="PTHR10088">
    <property type="entry name" value="GLUCOKINASE REGULATORY PROTEIN"/>
    <property type="match status" value="1"/>
</dbReference>
<dbReference type="PANTHER" id="PTHR10088:SF5">
    <property type="entry name" value="N-ACETYLMURAMIC ACID 6-PHOSPHATE ETHERASE"/>
    <property type="match status" value="1"/>
</dbReference>
<dbReference type="Pfam" id="PF22645">
    <property type="entry name" value="GKRP_SIS_N"/>
    <property type="match status" value="1"/>
</dbReference>
<dbReference type="SUPFAM" id="SSF53697">
    <property type="entry name" value="SIS domain"/>
    <property type="match status" value="1"/>
</dbReference>
<dbReference type="PROSITE" id="PS01272">
    <property type="entry name" value="GCKR"/>
    <property type="match status" value="1"/>
</dbReference>
<dbReference type="PROSITE" id="PS51464">
    <property type="entry name" value="SIS"/>
    <property type="match status" value="1"/>
</dbReference>
<sequence length="297" mass="30891">MNLGTLVSETRNPQTMDLDALPTPELVKRFNEQDTLVAEAVKATLPDVARAVDAAAAALKSGGRIIYMGAGTSGRLGVLDASECPPTFGVPHGLVVGLIAGGPGALLKAVEGAEDCQQAGEDDLVALNLQEQDLVVGLAASGRTPYVIGGLRYARQSGCTTVAVSCNPDSPIAREANIAISPVVGPEALTGSTRLKSGTAQKMVLNMISTGAMVKFGKVYQNLMVDMKATNVKLVDRACRMVVEATGIGREEAEALLKQTDFEVKPAILMALTGLDAAAAREKLAAHQGFLRAALEH</sequence>
<accession>A9N1U1</accession>
<gene>
    <name evidence="1" type="primary">murQ</name>
    <name type="ordered locus">SPAB_00355</name>
</gene>
<comment type="function">
    <text evidence="1">Specifically catalyzes the cleavage of the D-lactyl ether substituent of MurNAc 6-phosphate, producing GlcNAc 6-phosphate and D-lactate. Together with AnmK, is also required for the utilization of anhydro-N-acetylmuramic acid (anhMurNAc) either imported from the medium or derived from its own cell wall murein, and thus plays a role in cell wall recycling.</text>
</comment>
<comment type="catalytic activity">
    <reaction evidence="1">
        <text>N-acetyl-D-muramate 6-phosphate + H2O = N-acetyl-D-glucosamine 6-phosphate + (R)-lactate</text>
        <dbReference type="Rhea" id="RHEA:26410"/>
        <dbReference type="ChEBI" id="CHEBI:15377"/>
        <dbReference type="ChEBI" id="CHEBI:16004"/>
        <dbReference type="ChEBI" id="CHEBI:57513"/>
        <dbReference type="ChEBI" id="CHEBI:58722"/>
        <dbReference type="EC" id="4.2.1.126"/>
    </reaction>
</comment>
<comment type="pathway">
    <text evidence="1">Amino-sugar metabolism; 1,6-anhydro-N-acetylmuramate degradation.</text>
</comment>
<comment type="pathway">
    <text evidence="1">Amino-sugar metabolism; N-acetylmuramate degradation.</text>
</comment>
<comment type="pathway">
    <text evidence="1">Cell wall biogenesis; peptidoglycan recycling.</text>
</comment>
<comment type="subunit">
    <text evidence="1">Homodimer.</text>
</comment>
<comment type="induction">
    <text evidence="1">Induced by MurNAc 6-phosphate that releases the repressor MurR from the DNA. Repressed by MurR in the absence of MurNAc 6-phosphate.</text>
</comment>
<comment type="miscellaneous">
    <text evidence="1">A lyase-type mechanism (elimination/hydration) is suggested for the cleavage of the lactyl ether bond of MurNAc 6-phosphate, with the formation of an alpha,beta-unsaturated aldehyde intermediate with (E)-stereochemistry, followed by the syn addition of water to give product.</text>
</comment>
<comment type="similarity">
    <text evidence="1">Belongs to the GCKR-like family. MurNAc-6-P etherase subfamily.</text>
</comment>
<reference key="1">
    <citation type="submission" date="2007-11" db="EMBL/GenBank/DDBJ databases">
        <authorList>
            <consortium name="The Salmonella enterica serovar Paratyphi B Genome Sequencing Project"/>
            <person name="McClelland M."/>
            <person name="Sanderson E.K."/>
            <person name="Porwollik S."/>
            <person name="Spieth J."/>
            <person name="Clifton W.S."/>
            <person name="Fulton R."/>
            <person name="Cordes M."/>
            <person name="Wollam A."/>
            <person name="Shah N."/>
            <person name="Pepin K."/>
            <person name="Bhonagiri V."/>
            <person name="Nash W."/>
            <person name="Johnson M."/>
            <person name="Thiruvilangam P."/>
            <person name="Wilson R."/>
        </authorList>
    </citation>
    <scope>NUCLEOTIDE SEQUENCE [LARGE SCALE GENOMIC DNA]</scope>
    <source>
        <strain>ATCC BAA-1250 / SPB7</strain>
    </source>
</reference>
<evidence type="ECO:0000255" key="1">
    <source>
        <dbReference type="HAMAP-Rule" id="MF_00068"/>
    </source>
</evidence>
<feature type="chain" id="PRO_1000075112" description="N-acetylmuramic acid 6-phosphate etherase">
    <location>
        <begin position="1"/>
        <end position="297"/>
    </location>
</feature>
<feature type="domain" description="SIS" evidence="1">
    <location>
        <begin position="55"/>
        <end position="218"/>
    </location>
</feature>
<feature type="active site" description="Proton donor" evidence="1">
    <location>
        <position position="83"/>
    </location>
</feature>
<feature type="active site" evidence="1">
    <location>
        <position position="114"/>
    </location>
</feature>
<proteinExistence type="inferred from homology"/>
<name>MURQ_SALPB</name>
<organism>
    <name type="scientific">Salmonella paratyphi B (strain ATCC BAA-1250 / SPB7)</name>
    <dbReference type="NCBI Taxonomy" id="1016998"/>
    <lineage>
        <taxon>Bacteria</taxon>
        <taxon>Pseudomonadati</taxon>
        <taxon>Pseudomonadota</taxon>
        <taxon>Gammaproteobacteria</taxon>
        <taxon>Enterobacterales</taxon>
        <taxon>Enterobacteriaceae</taxon>
        <taxon>Salmonella</taxon>
    </lineage>
</organism>
<protein>
    <recommendedName>
        <fullName evidence="1">N-acetylmuramic acid 6-phosphate etherase</fullName>
        <shortName evidence="1">MurNAc-6-P etherase</shortName>
        <ecNumber evidence="1">4.2.1.126</ecNumber>
    </recommendedName>
    <alternativeName>
        <fullName evidence="1">N-acetylmuramic acid 6-phosphate hydrolase</fullName>
    </alternativeName>
    <alternativeName>
        <fullName evidence="1">N-acetylmuramic acid 6-phosphate lyase</fullName>
    </alternativeName>
</protein>